<organism>
    <name type="scientific">Salmonella typhimurium (strain LT2 / SGSC1412 / ATCC 700720)</name>
    <dbReference type="NCBI Taxonomy" id="99287"/>
    <lineage>
        <taxon>Bacteria</taxon>
        <taxon>Pseudomonadati</taxon>
        <taxon>Pseudomonadota</taxon>
        <taxon>Gammaproteobacteria</taxon>
        <taxon>Enterobacterales</taxon>
        <taxon>Enterobacteriaceae</taxon>
        <taxon>Salmonella</taxon>
    </lineage>
</organism>
<proteinExistence type="inferred from homology"/>
<sequence>MSKPLCSTGLRWLWLVVVVLIIDLGSKYLILQNFALGDTVGLFPSLNLHYARNYGAAFSFLADSGGWQRWFFAGIAIGICVILLVMMYRSKATQKLNNIAYALIIGGALGNLFDRLWHGFVVDMIDFYVGNWHFATFNLADSAICIGAALIVLEGFLPKPTAKEQA</sequence>
<reference key="1">
    <citation type="journal article" date="2001" name="Nature">
        <title>Complete genome sequence of Salmonella enterica serovar Typhimurium LT2.</title>
        <authorList>
            <person name="McClelland M."/>
            <person name="Sanderson K.E."/>
            <person name="Spieth J."/>
            <person name="Clifton S.W."/>
            <person name="Latreille P."/>
            <person name="Courtney L."/>
            <person name="Porwollik S."/>
            <person name="Ali J."/>
            <person name="Dante M."/>
            <person name="Du F."/>
            <person name="Hou S."/>
            <person name="Layman D."/>
            <person name="Leonard S."/>
            <person name="Nguyen C."/>
            <person name="Scott K."/>
            <person name="Holmes A."/>
            <person name="Grewal N."/>
            <person name="Mulvaney E."/>
            <person name="Ryan E."/>
            <person name="Sun H."/>
            <person name="Florea L."/>
            <person name="Miller W."/>
            <person name="Stoneking T."/>
            <person name="Nhan M."/>
            <person name="Waterston R."/>
            <person name="Wilson R.K."/>
        </authorList>
    </citation>
    <scope>NUCLEOTIDE SEQUENCE [LARGE SCALE GENOMIC DNA]</scope>
    <source>
        <strain>LT2 / SGSC1412 / ATCC 700720</strain>
    </source>
</reference>
<gene>
    <name evidence="1" type="primary">lspA</name>
    <name type="ordered locus">STM0047</name>
</gene>
<comment type="function">
    <text evidence="1">This protein specifically catalyzes the removal of signal peptides from prolipoproteins.</text>
</comment>
<comment type="catalytic activity">
    <reaction evidence="1">
        <text>Release of signal peptides from bacterial membrane prolipoproteins. Hydrolyzes -Xaa-Yaa-Zaa-|-(S,diacylglyceryl)Cys-, in which Xaa is hydrophobic (preferably Leu), and Yaa (Ala or Ser) and Zaa (Gly or Ala) have small, neutral side chains.</text>
        <dbReference type="EC" id="3.4.23.36"/>
    </reaction>
</comment>
<comment type="pathway">
    <text evidence="1">Protein modification; lipoprotein biosynthesis (signal peptide cleavage).</text>
</comment>
<comment type="subcellular location">
    <subcellularLocation>
        <location evidence="1">Cell inner membrane</location>
        <topology evidence="1">Multi-pass membrane protein</topology>
    </subcellularLocation>
</comment>
<comment type="similarity">
    <text evidence="1">Belongs to the peptidase A8 family.</text>
</comment>
<evidence type="ECO:0000255" key="1">
    <source>
        <dbReference type="HAMAP-Rule" id="MF_00161"/>
    </source>
</evidence>
<protein>
    <recommendedName>
        <fullName evidence="1">Lipoprotein signal peptidase</fullName>
        <ecNumber evidence="1">3.4.23.36</ecNumber>
    </recommendedName>
    <alternativeName>
        <fullName evidence="1">Prolipoprotein signal peptidase</fullName>
    </alternativeName>
    <alternativeName>
        <fullName evidence="1">Signal peptidase II</fullName>
        <shortName evidence="1">SPase II</shortName>
    </alternativeName>
</protein>
<dbReference type="EC" id="3.4.23.36" evidence="1"/>
<dbReference type="EMBL" id="AE006468">
    <property type="protein sequence ID" value="AAL19011.1"/>
    <property type="molecule type" value="Genomic_DNA"/>
</dbReference>
<dbReference type="RefSeq" id="NP_459052.1">
    <property type="nucleotide sequence ID" value="NC_003197.2"/>
</dbReference>
<dbReference type="RefSeq" id="WP_000042739.1">
    <property type="nucleotide sequence ID" value="NC_003197.2"/>
</dbReference>
<dbReference type="SMR" id="Q8ZRY9"/>
<dbReference type="STRING" id="99287.STM0047"/>
<dbReference type="MEROPS" id="A08.001"/>
<dbReference type="PaxDb" id="99287-STM0047"/>
<dbReference type="GeneID" id="1251565"/>
<dbReference type="KEGG" id="stm:STM0047"/>
<dbReference type="PATRIC" id="fig|99287.12.peg.49"/>
<dbReference type="HOGENOM" id="CLU_083252_4_0_6"/>
<dbReference type="OMA" id="NRWYFPA"/>
<dbReference type="PhylomeDB" id="Q8ZRY9"/>
<dbReference type="BioCyc" id="SENT99287:STM0047-MONOMER"/>
<dbReference type="UniPathway" id="UPA00665"/>
<dbReference type="Proteomes" id="UP000001014">
    <property type="component" value="Chromosome"/>
</dbReference>
<dbReference type="GO" id="GO:0005886">
    <property type="term" value="C:plasma membrane"/>
    <property type="evidence" value="ECO:0000318"/>
    <property type="project" value="GO_Central"/>
</dbReference>
<dbReference type="GO" id="GO:0004190">
    <property type="term" value="F:aspartic-type endopeptidase activity"/>
    <property type="evidence" value="ECO:0007669"/>
    <property type="project" value="UniProtKB-UniRule"/>
</dbReference>
<dbReference type="GO" id="GO:0004175">
    <property type="term" value="F:endopeptidase activity"/>
    <property type="evidence" value="ECO:0000318"/>
    <property type="project" value="GO_Central"/>
</dbReference>
<dbReference type="GO" id="GO:0006508">
    <property type="term" value="P:proteolysis"/>
    <property type="evidence" value="ECO:0007669"/>
    <property type="project" value="UniProtKB-KW"/>
</dbReference>
<dbReference type="HAMAP" id="MF_00161">
    <property type="entry name" value="LspA"/>
    <property type="match status" value="1"/>
</dbReference>
<dbReference type="InterPro" id="IPR001872">
    <property type="entry name" value="Peptidase_A8"/>
</dbReference>
<dbReference type="NCBIfam" id="TIGR00077">
    <property type="entry name" value="lspA"/>
    <property type="match status" value="1"/>
</dbReference>
<dbReference type="PANTHER" id="PTHR33695">
    <property type="entry name" value="LIPOPROTEIN SIGNAL PEPTIDASE"/>
    <property type="match status" value="1"/>
</dbReference>
<dbReference type="PANTHER" id="PTHR33695:SF1">
    <property type="entry name" value="LIPOPROTEIN SIGNAL PEPTIDASE"/>
    <property type="match status" value="1"/>
</dbReference>
<dbReference type="Pfam" id="PF01252">
    <property type="entry name" value="Peptidase_A8"/>
    <property type="match status" value="1"/>
</dbReference>
<dbReference type="PRINTS" id="PR00781">
    <property type="entry name" value="LIPOSIGPTASE"/>
</dbReference>
<dbReference type="PROSITE" id="PS00855">
    <property type="entry name" value="SPASE_II"/>
    <property type="match status" value="1"/>
</dbReference>
<keyword id="KW-0064">Aspartyl protease</keyword>
<keyword id="KW-0997">Cell inner membrane</keyword>
<keyword id="KW-1003">Cell membrane</keyword>
<keyword id="KW-0378">Hydrolase</keyword>
<keyword id="KW-0472">Membrane</keyword>
<keyword id="KW-0645">Protease</keyword>
<keyword id="KW-1185">Reference proteome</keyword>
<keyword id="KW-0812">Transmembrane</keyword>
<keyword id="KW-1133">Transmembrane helix</keyword>
<feature type="chain" id="PRO_0000178810" description="Lipoprotein signal peptidase">
    <location>
        <begin position="1"/>
        <end position="166"/>
    </location>
</feature>
<feature type="transmembrane region" description="Helical" evidence="1">
    <location>
        <begin position="12"/>
        <end position="32"/>
    </location>
</feature>
<feature type="transmembrane region" description="Helical" evidence="1">
    <location>
        <begin position="70"/>
        <end position="90"/>
    </location>
</feature>
<feature type="transmembrane region" description="Helical" evidence="1">
    <location>
        <begin position="102"/>
        <end position="122"/>
    </location>
</feature>
<feature type="transmembrane region" description="Helical" evidence="1">
    <location>
        <begin position="137"/>
        <end position="157"/>
    </location>
</feature>
<feature type="active site" evidence="1">
    <location>
        <position position="123"/>
    </location>
</feature>
<feature type="active site" evidence="1">
    <location>
        <position position="141"/>
    </location>
</feature>
<accession>Q8ZRY9</accession>
<name>LSPA_SALTY</name>